<protein>
    <recommendedName>
        <fullName evidence="1">S-ribosylhomocysteine lyase</fullName>
        <ecNumber evidence="1">4.4.1.21</ecNumber>
    </recommendedName>
    <alternativeName>
        <fullName evidence="1">AI-2 synthesis protein</fullName>
    </alternativeName>
    <alternativeName>
        <fullName evidence="1">Autoinducer-2 production protein LuxS</fullName>
    </alternativeName>
</protein>
<comment type="function">
    <text evidence="1">Involved in the synthesis of autoinducer 2 (AI-2) which is secreted by bacteria and is used to communicate both the cell density and the metabolic potential of the environment. The regulation of gene expression in response to changes in cell density is called quorum sensing. Catalyzes the transformation of S-ribosylhomocysteine (RHC) to homocysteine (HC) and 4,5-dihydroxy-2,3-pentadione (DPD).</text>
</comment>
<comment type="catalytic activity">
    <reaction evidence="1">
        <text>S-(5-deoxy-D-ribos-5-yl)-L-homocysteine = (S)-4,5-dihydroxypentane-2,3-dione + L-homocysteine</text>
        <dbReference type="Rhea" id="RHEA:17753"/>
        <dbReference type="ChEBI" id="CHEBI:29484"/>
        <dbReference type="ChEBI" id="CHEBI:58195"/>
        <dbReference type="ChEBI" id="CHEBI:58199"/>
        <dbReference type="EC" id="4.4.1.21"/>
    </reaction>
</comment>
<comment type="cofactor">
    <cofactor evidence="1">
        <name>Fe cation</name>
        <dbReference type="ChEBI" id="CHEBI:24875"/>
    </cofactor>
    <text evidence="1">Binds 1 Fe cation per subunit.</text>
</comment>
<comment type="subunit">
    <text evidence="1">Homodimer.</text>
</comment>
<comment type="similarity">
    <text evidence="1">Belongs to the LuxS family.</text>
</comment>
<feature type="chain" id="PRO_0000298056" description="S-ribosylhomocysteine lyase">
    <location>
        <begin position="1"/>
        <end position="167"/>
    </location>
</feature>
<feature type="binding site" evidence="1">
    <location>
        <position position="54"/>
    </location>
    <ligand>
        <name>Fe cation</name>
        <dbReference type="ChEBI" id="CHEBI:24875"/>
    </ligand>
</feature>
<feature type="binding site" evidence="1">
    <location>
        <position position="58"/>
    </location>
    <ligand>
        <name>Fe cation</name>
        <dbReference type="ChEBI" id="CHEBI:24875"/>
    </ligand>
</feature>
<feature type="binding site" evidence="1">
    <location>
        <position position="128"/>
    </location>
    <ligand>
        <name>Fe cation</name>
        <dbReference type="ChEBI" id="CHEBI:24875"/>
    </ligand>
</feature>
<organism>
    <name type="scientific">Sulfurimonas denitrificans (strain ATCC 33889 / DSM 1251)</name>
    <name type="common">Thiomicrospira denitrificans (strain ATCC 33889 / DSM 1251)</name>
    <dbReference type="NCBI Taxonomy" id="326298"/>
    <lineage>
        <taxon>Bacteria</taxon>
        <taxon>Pseudomonadati</taxon>
        <taxon>Campylobacterota</taxon>
        <taxon>Epsilonproteobacteria</taxon>
        <taxon>Campylobacterales</taxon>
        <taxon>Sulfurimonadaceae</taxon>
        <taxon>Sulfurimonas</taxon>
    </lineage>
</organism>
<sequence>MPLLDSFKVDHTIMPAPAVRRAKGMKTPSGDDITVFDLRFVAPNKEILSSEGIHTLEHLFAGFMRDHLNSKDVEIIDISPMGCRTGFYMSLIGSPDEQRVADAWSASMQDILGVKEQKDIPELNVYQCGTYKMHSLEDAKEIASKVLERRIGVMDNDALALDESKIG</sequence>
<evidence type="ECO:0000255" key="1">
    <source>
        <dbReference type="HAMAP-Rule" id="MF_00091"/>
    </source>
</evidence>
<keyword id="KW-0071">Autoinducer synthesis</keyword>
<keyword id="KW-0408">Iron</keyword>
<keyword id="KW-0456">Lyase</keyword>
<keyword id="KW-0479">Metal-binding</keyword>
<keyword id="KW-0673">Quorum sensing</keyword>
<keyword id="KW-1185">Reference proteome</keyword>
<dbReference type="EC" id="4.4.1.21" evidence="1"/>
<dbReference type="EMBL" id="CP000153">
    <property type="protein sequence ID" value="ABB45212.1"/>
    <property type="molecule type" value="Genomic_DNA"/>
</dbReference>
<dbReference type="RefSeq" id="WP_011373552.1">
    <property type="nucleotide sequence ID" value="NC_007575.1"/>
</dbReference>
<dbReference type="SMR" id="Q30P69"/>
<dbReference type="STRING" id="326298.Suden_1938"/>
<dbReference type="KEGG" id="tdn:Suden_1938"/>
<dbReference type="eggNOG" id="COG1854">
    <property type="taxonomic scope" value="Bacteria"/>
</dbReference>
<dbReference type="HOGENOM" id="CLU_107531_2_0_7"/>
<dbReference type="OrthoDB" id="9788129at2"/>
<dbReference type="Proteomes" id="UP000002714">
    <property type="component" value="Chromosome"/>
</dbReference>
<dbReference type="GO" id="GO:0005506">
    <property type="term" value="F:iron ion binding"/>
    <property type="evidence" value="ECO:0007669"/>
    <property type="project" value="InterPro"/>
</dbReference>
<dbReference type="GO" id="GO:0043768">
    <property type="term" value="F:S-ribosylhomocysteine lyase activity"/>
    <property type="evidence" value="ECO:0007669"/>
    <property type="project" value="UniProtKB-UniRule"/>
</dbReference>
<dbReference type="GO" id="GO:0009372">
    <property type="term" value="P:quorum sensing"/>
    <property type="evidence" value="ECO:0007669"/>
    <property type="project" value="UniProtKB-UniRule"/>
</dbReference>
<dbReference type="Gene3D" id="3.30.1360.80">
    <property type="entry name" value="S-ribosylhomocysteinase (LuxS)"/>
    <property type="match status" value="1"/>
</dbReference>
<dbReference type="HAMAP" id="MF_00091">
    <property type="entry name" value="LuxS"/>
    <property type="match status" value="1"/>
</dbReference>
<dbReference type="InterPro" id="IPR037005">
    <property type="entry name" value="LuxS_sf"/>
</dbReference>
<dbReference type="InterPro" id="IPR011249">
    <property type="entry name" value="Metalloenz_LuxS/M16"/>
</dbReference>
<dbReference type="InterPro" id="IPR003815">
    <property type="entry name" value="S-ribosylhomocysteinase"/>
</dbReference>
<dbReference type="NCBIfam" id="NF002602">
    <property type="entry name" value="PRK02260.1-2"/>
    <property type="match status" value="1"/>
</dbReference>
<dbReference type="PANTHER" id="PTHR35799">
    <property type="entry name" value="S-RIBOSYLHOMOCYSTEINE LYASE"/>
    <property type="match status" value="1"/>
</dbReference>
<dbReference type="PANTHER" id="PTHR35799:SF1">
    <property type="entry name" value="S-RIBOSYLHOMOCYSTEINE LYASE"/>
    <property type="match status" value="1"/>
</dbReference>
<dbReference type="Pfam" id="PF02664">
    <property type="entry name" value="LuxS"/>
    <property type="match status" value="1"/>
</dbReference>
<dbReference type="PIRSF" id="PIRSF006160">
    <property type="entry name" value="AI2"/>
    <property type="match status" value="1"/>
</dbReference>
<dbReference type="PRINTS" id="PR01487">
    <property type="entry name" value="LUXSPROTEIN"/>
</dbReference>
<dbReference type="SUPFAM" id="SSF63411">
    <property type="entry name" value="LuxS/MPP-like metallohydrolase"/>
    <property type="match status" value="1"/>
</dbReference>
<proteinExistence type="inferred from homology"/>
<gene>
    <name evidence="1" type="primary">luxS</name>
    <name type="ordered locus">Suden_1938</name>
</gene>
<accession>Q30P69</accession>
<reference key="1">
    <citation type="journal article" date="2008" name="Appl. Environ. Microbiol.">
        <title>Genome of the epsilonproteobacterial chemolithoautotroph Sulfurimonas denitrificans.</title>
        <authorList>
            <person name="Sievert S.M."/>
            <person name="Scott K.M."/>
            <person name="Klotz M.G."/>
            <person name="Chain P.S.G."/>
            <person name="Hauser L.J."/>
            <person name="Hemp J."/>
            <person name="Huegler M."/>
            <person name="Land M."/>
            <person name="Lapidus A."/>
            <person name="Larimer F.W."/>
            <person name="Lucas S."/>
            <person name="Malfatti S.A."/>
            <person name="Meyer F."/>
            <person name="Paulsen I.T."/>
            <person name="Ren Q."/>
            <person name="Simon J."/>
            <person name="Bailey K."/>
            <person name="Diaz E."/>
            <person name="Fitzpatrick K.A."/>
            <person name="Glover B."/>
            <person name="Gwatney N."/>
            <person name="Korajkic A."/>
            <person name="Long A."/>
            <person name="Mobberley J.M."/>
            <person name="Pantry S.N."/>
            <person name="Pazder G."/>
            <person name="Peterson S."/>
            <person name="Quintanilla J.D."/>
            <person name="Sprinkle R."/>
            <person name="Stephens J."/>
            <person name="Thomas P."/>
            <person name="Vaughn R."/>
            <person name="Weber M.J."/>
            <person name="Wooten L.L."/>
        </authorList>
    </citation>
    <scope>NUCLEOTIDE SEQUENCE [LARGE SCALE GENOMIC DNA]</scope>
    <source>
        <strain>ATCC 33889 / DSM 1251</strain>
    </source>
</reference>
<name>LUXS_SULDN</name>